<accession>A8YZA3</accession>
<comment type="function">
    <text evidence="1">Catalyzes the ATP-dependent phosphorylation of N-acetyl-L-glutamate.</text>
</comment>
<comment type="catalytic activity">
    <reaction evidence="1">
        <text>N-acetyl-L-glutamate + ATP = N-acetyl-L-glutamyl 5-phosphate + ADP</text>
        <dbReference type="Rhea" id="RHEA:14629"/>
        <dbReference type="ChEBI" id="CHEBI:30616"/>
        <dbReference type="ChEBI" id="CHEBI:44337"/>
        <dbReference type="ChEBI" id="CHEBI:57936"/>
        <dbReference type="ChEBI" id="CHEBI:456216"/>
        <dbReference type="EC" id="2.7.2.8"/>
    </reaction>
</comment>
<comment type="pathway">
    <text evidence="1">Amino-acid biosynthesis; L-arginine biosynthesis; N(2)-acetyl-L-ornithine from L-glutamate: step 2/4.</text>
</comment>
<comment type="subcellular location">
    <subcellularLocation>
        <location evidence="1">Cytoplasm</location>
    </subcellularLocation>
</comment>
<comment type="similarity">
    <text evidence="1">Belongs to the acetylglutamate kinase family. ArgB subfamily.</text>
</comment>
<keyword id="KW-0028">Amino-acid biosynthesis</keyword>
<keyword id="KW-0055">Arginine biosynthesis</keyword>
<keyword id="KW-0067">ATP-binding</keyword>
<keyword id="KW-0963">Cytoplasm</keyword>
<keyword id="KW-0418">Kinase</keyword>
<keyword id="KW-0547">Nucleotide-binding</keyword>
<keyword id="KW-0808">Transferase</keyword>
<evidence type="ECO:0000255" key="1">
    <source>
        <dbReference type="HAMAP-Rule" id="MF_00082"/>
    </source>
</evidence>
<feature type="chain" id="PRO_1000075323" description="Acetylglutamate kinase">
    <location>
        <begin position="1"/>
        <end position="254"/>
    </location>
</feature>
<feature type="binding site" evidence="1">
    <location>
        <begin position="40"/>
        <end position="41"/>
    </location>
    <ligand>
        <name>substrate</name>
    </ligand>
</feature>
<feature type="binding site" evidence="1">
    <location>
        <position position="62"/>
    </location>
    <ligand>
        <name>substrate</name>
    </ligand>
</feature>
<feature type="binding site" evidence="1">
    <location>
        <position position="154"/>
    </location>
    <ligand>
        <name>substrate</name>
    </ligand>
</feature>
<feature type="site" description="Transition state stabilizer" evidence="1">
    <location>
        <position position="7"/>
    </location>
</feature>
<feature type="site" description="Transition state stabilizer" evidence="1">
    <location>
        <position position="212"/>
    </location>
</feature>
<organism>
    <name type="scientific">Staphylococcus aureus (strain USA300 / TCH1516)</name>
    <dbReference type="NCBI Taxonomy" id="451516"/>
    <lineage>
        <taxon>Bacteria</taxon>
        <taxon>Bacillati</taxon>
        <taxon>Bacillota</taxon>
        <taxon>Bacilli</taxon>
        <taxon>Bacillales</taxon>
        <taxon>Staphylococcaceae</taxon>
        <taxon>Staphylococcus</taxon>
    </lineage>
</organism>
<name>ARGB_STAAT</name>
<dbReference type="EC" id="2.7.2.8" evidence="1"/>
<dbReference type="EMBL" id="CP000730">
    <property type="protein sequence ID" value="ABX28226.1"/>
    <property type="molecule type" value="Genomic_DNA"/>
</dbReference>
<dbReference type="RefSeq" id="WP_000668894.1">
    <property type="nucleotide sequence ID" value="NC_010079.1"/>
</dbReference>
<dbReference type="SMR" id="A8YZA3"/>
<dbReference type="KEGG" id="sax:USA300HOU_0195"/>
<dbReference type="HOGENOM" id="CLU_053680_1_0_9"/>
<dbReference type="UniPathway" id="UPA00068">
    <property type="reaction ID" value="UER00107"/>
</dbReference>
<dbReference type="GO" id="GO:0005737">
    <property type="term" value="C:cytoplasm"/>
    <property type="evidence" value="ECO:0007669"/>
    <property type="project" value="UniProtKB-SubCell"/>
</dbReference>
<dbReference type="GO" id="GO:0003991">
    <property type="term" value="F:acetylglutamate kinase activity"/>
    <property type="evidence" value="ECO:0007669"/>
    <property type="project" value="UniProtKB-UniRule"/>
</dbReference>
<dbReference type="GO" id="GO:0005524">
    <property type="term" value="F:ATP binding"/>
    <property type="evidence" value="ECO:0007669"/>
    <property type="project" value="UniProtKB-UniRule"/>
</dbReference>
<dbReference type="GO" id="GO:0042450">
    <property type="term" value="P:arginine biosynthetic process via ornithine"/>
    <property type="evidence" value="ECO:0007669"/>
    <property type="project" value="UniProtKB-UniRule"/>
</dbReference>
<dbReference type="GO" id="GO:0006526">
    <property type="term" value="P:L-arginine biosynthetic process"/>
    <property type="evidence" value="ECO:0007669"/>
    <property type="project" value="UniProtKB-UniPathway"/>
</dbReference>
<dbReference type="CDD" id="cd04238">
    <property type="entry name" value="AAK_NAGK-like"/>
    <property type="match status" value="1"/>
</dbReference>
<dbReference type="FunFam" id="3.40.1160.10:FF:000037">
    <property type="entry name" value="Acetylglutamate kinase"/>
    <property type="match status" value="1"/>
</dbReference>
<dbReference type="Gene3D" id="3.40.1160.10">
    <property type="entry name" value="Acetylglutamate kinase-like"/>
    <property type="match status" value="1"/>
</dbReference>
<dbReference type="HAMAP" id="MF_00082">
    <property type="entry name" value="ArgB"/>
    <property type="match status" value="1"/>
</dbReference>
<dbReference type="InterPro" id="IPR036393">
    <property type="entry name" value="AceGlu_kinase-like_sf"/>
</dbReference>
<dbReference type="InterPro" id="IPR004662">
    <property type="entry name" value="AcgluKinase_fam"/>
</dbReference>
<dbReference type="InterPro" id="IPR037528">
    <property type="entry name" value="ArgB"/>
</dbReference>
<dbReference type="InterPro" id="IPR001048">
    <property type="entry name" value="Asp/Glu/Uridylate_kinase"/>
</dbReference>
<dbReference type="NCBIfam" id="TIGR00761">
    <property type="entry name" value="argB"/>
    <property type="match status" value="1"/>
</dbReference>
<dbReference type="PANTHER" id="PTHR23342">
    <property type="entry name" value="N-ACETYLGLUTAMATE SYNTHASE"/>
    <property type="match status" value="1"/>
</dbReference>
<dbReference type="PANTHER" id="PTHR23342:SF0">
    <property type="entry name" value="N-ACETYLGLUTAMATE SYNTHASE, MITOCHONDRIAL"/>
    <property type="match status" value="1"/>
</dbReference>
<dbReference type="Pfam" id="PF00696">
    <property type="entry name" value="AA_kinase"/>
    <property type="match status" value="1"/>
</dbReference>
<dbReference type="PIRSF" id="PIRSF000728">
    <property type="entry name" value="NAGK"/>
    <property type="match status" value="1"/>
</dbReference>
<dbReference type="SUPFAM" id="SSF53633">
    <property type="entry name" value="Carbamate kinase-like"/>
    <property type="match status" value="1"/>
</dbReference>
<protein>
    <recommendedName>
        <fullName evidence="1">Acetylglutamate kinase</fullName>
        <ecNumber evidence="1">2.7.2.8</ecNumber>
    </recommendedName>
    <alternativeName>
        <fullName evidence="1">N-acetyl-L-glutamate 5-phosphotransferase</fullName>
    </alternativeName>
    <alternativeName>
        <fullName evidence="1">NAG kinase</fullName>
        <shortName evidence="1">NAGK</shortName>
    </alternativeName>
</protein>
<gene>
    <name evidence="1" type="primary">argB</name>
    <name type="ordered locus">USA300HOU_0195</name>
</gene>
<sequence length="254" mass="27739">MKFIVIKIGGSTLSDMHPSIINNIKHLRSNNIYPIIVHGGGPFINEALSNQQIEPHFVNGLRVTDKATMTITKHTLIADVNTALVAQFNQHQCSAIGLCGLDAQLFEITSFDQQYGYVGVPTALNKDALQYLCTKFVPIINSIGFNNHDGEFYNINADTLAYFIASSLKAPIYVLSNIAGVLINDVVIPQLPLVDIHQYIEHGDIYGGMIPKVLDAKNAIENGCPKVIIASGNKPNIIESIYNNDFVGTTILNS</sequence>
<reference key="1">
    <citation type="journal article" date="2007" name="BMC Microbiol.">
        <title>Subtle genetic changes enhance virulence of methicillin resistant and sensitive Staphylococcus aureus.</title>
        <authorList>
            <person name="Highlander S.K."/>
            <person name="Hulten K.G."/>
            <person name="Qin X."/>
            <person name="Jiang H."/>
            <person name="Yerrapragada S."/>
            <person name="Mason E.O. Jr."/>
            <person name="Shang Y."/>
            <person name="Williams T.M."/>
            <person name="Fortunov R.M."/>
            <person name="Liu Y."/>
            <person name="Igboeli O."/>
            <person name="Petrosino J."/>
            <person name="Tirumalai M."/>
            <person name="Uzman A."/>
            <person name="Fox G.E."/>
            <person name="Cardenas A.M."/>
            <person name="Muzny D.M."/>
            <person name="Hemphill L."/>
            <person name="Ding Y."/>
            <person name="Dugan S."/>
            <person name="Blyth P.R."/>
            <person name="Buhay C.J."/>
            <person name="Dinh H.H."/>
            <person name="Hawes A.C."/>
            <person name="Holder M."/>
            <person name="Kovar C.L."/>
            <person name="Lee S.L."/>
            <person name="Liu W."/>
            <person name="Nazareth L.V."/>
            <person name="Wang Q."/>
            <person name="Zhou J."/>
            <person name="Kaplan S.L."/>
            <person name="Weinstock G.M."/>
        </authorList>
    </citation>
    <scope>NUCLEOTIDE SEQUENCE [LARGE SCALE GENOMIC DNA]</scope>
    <source>
        <strain>USA300 / TCH1516</strain>
    </source>
</reference>
<proteinExistence type="inferred from homology"/>